<sequence>MAFWKPGTEKPRFEEDGEGGIVFMSNNLASSSSSSYGYANIEKQRQRLPVYKYRTEILYLVENHATTIIVGETGSGKTTQIPQYLKEAGWAEGGRVIACTQPRRLAVQAVSARVAEEMGVNLGEEVGYTIRFEDHTTSGVTSVKFLTDGVLIREMMEDPLLTKYSVIMIDEAHERSISTDILLGLLKKIQRRRPELRLIISSATIEAKTMSNFFNSSKKRHAPEGSTPGPKLEPAILSVEGRGFSVKIHYVEEPVSDYIRSVVSTILLINEREPPGDVLVFLTGQEDIETAIKLLEEEAHSNQKNSSGLLPLPLYSGLSRSEQELIFTPTPRGKRKVILSTNIAETSLTLEGVVYVIDSGFSKQKFYNPISDIESLVVAPISKASARQRSGRAGRVRPGKCYRLYTEDYFLNQMPGEGIPEMQRSNLVSTVIQLKALGIDNILGFDWPAPPSSEAMIRALEVLYSLQILDDDAKLTSPTGFQVAELPLDPMISKMILASSELGCSHEIITIAAVLSVQSVWIIARGVQKEQDEAKLRFAAAEGDHVTFLNVYKGFLESKKPTQWCYKNFLNYQSMKKVVEIRDQLKRIARRLGITLKSCDGDMEAVRKAVTAGFFANACRLEPHSNGVYKTIRGSEEVYIHPSSVLFRVNPKWVVYQSIVSTERQYMRNVVTINPSWLTEVAPHFYQNRQNAMSF</sequence>
<accession>F4JRJ6</accession>
<accession>O49516</accession>
<feature type="chain" id="PRO_0000434937" description="Probable pre-mRNA-splicing factor ATP-dependent RNA helicase DEAH9">
    <location>
        <begin position="1"/>
        <end position="695"/>
    </location>
</feature>
<feature type="domain" description="Helicase ATP-binding" evidence="1">
    <location>
        <begin position="58"/>
        <end position="223"/>
    </location>
</feature>
<feature type="domain" description="Helicase C-terminal" evidence="2">
    <location>
        <begin position="261"/>
        <end position="438"/>
    </location>
</feature>
<feature type="short sequence motif" description="DEAH box" evidence="1">
    <location>
        <begin position="170"/>
        <end position="173"/>
    </location>
</feature>
<feature type="binding site" evidence="1">
    <location>
        <begin position="71"/>
        <end position="78"/>
    </location>
    <ligand>
        <name>ATP</name>
        <dbReference type="ChEBI" id="CHEBI:30616"/>
    </ligand>
</feature>
<gene>
    <name evidence="4" type="ordered locus">At4g18465</name>
    <name evidence="5" type="ORF">F28J12.120</name>
</gene>
<proteinExistence type="inferred from homology"/>
<name>DEAH9_ARATH</name>
<dbReference type="EC" id="3.6.4.13"/>
<dbReference type="EMBL" id="AL021710">
    <property type="protein sequence ID" value="CAA16726.1"/>
    <property type="status" value="ALT_SEQ"/>
    <property type="molecule type" value="Genomic_DNA"/>
</dbReference>
<dbReference type="EMBL" id="AL161548">
    <property type="protein sequence ID" value="CAB78848.1"/>
    <property type="status" value="ALT_SEQ"/>
    <property type="molecule type" value="Genomic_DNA"/>
</dbReference>
<dbReference type="EMBL" id="CP002687">
    <property type="protein sequence ID" value="AEE84050.1"/>
    <property type="molecule type" value="Genomic_DNA"/>
</dbReference>
<dbReference type="PIR" id="T04542">
    <property type="entry name" value="T04542"/>
</dbReference>
<dbReference type="RefSeq" id="NP_567558.2">
    <property type="nucleotide sequence ID" value="NM_117961.3"/>
</dbReference>
<dbReference type="SMR" id="F4JRJ6"/>
<dbReference type="FunCoup" id="F4JRJ6">
    <property type="interactions" value="2745"/>
</dbReference>
<dbReference type="STRING" id="3702.F4JRJ6"/>
<dbReference type="GlyGen" id="F4JRJ6">
    <property type="glycosylation" value="2 sites"/>
</dbReference>
<dbReference type="iPTMnet" id="F4JRJ6"/>
<dbReference type="PaxDb" id="3702-AT4G18465.1"/>
<dbReference type="ProteomicsDB" id="222199"/>
<dbReference type="EnsemblPlants" id="AT4G18465.1">
    <property type="protein sequence ID" value="AT4G18465.1"/>
    <property type="gene ID" value="AT4G18465"/>
</dbReference>
<dbReference type="GeneID" id="827579"/>
<dbReference type="Gramene" id="AT4G18465.1">
    <property type="protein sequence ID" value="AT4G18465.1"/>
    <property type="gene ID" value="AT4G18465"/>
</dbReference>
<dbReference type="KEGG" id="ath:AT4G18465"/>
<dbReference type="Araport" id="AT4G18465"/>
<dbReference type="TAIR" id="AT4G18465"/>
<dbReference type="eggNOG" id="KOG0922">
    <property type="taxonomic scope" value="Eukaryota"/>
</dbReference>
<dbReference type="HOGENOM" id="CLU_001832_5_11_1"/>
<dbReference type="InParanoid" id="F4JRJ6"/>
<dbReference type="OMA" id="FHEVMET"/>
<dbReference type="OrthoDB" id="10253254at2759"/>
<dbReference type="CD-CODE" id="4299E36E">
    <property type="entry name" value="Nucleolus"/>
</dbReference>
<dbReference type="PRO" id="PR:F4JRJ6"/>
<dbReference type="Proteomes" id="UP000006548">
    <property type="component" value="Chromosome 4"/>
</dbReference>
<dbReference type="ExpressionAtlas" id="F4JRJ6">
    <property type="expression patterns" value="baseline and differential"/>
</dbReference>
<dbReference type="GO" id="GO:0005829">
    <property type="term" value="C:cytosol"/>
    <property type="evidence" value="ECO:0007005"/>
    <property type="project" value="TAIR"/>
</dbReference>
<dbReference type="GO" id="GO:0009506">
    <property type="term" value="C:plasmodesma"/>
    <property type="evidence" value="ECO:0007005"/>
    <property type="project" value="TAIR"/>
</dbReference>
<dbReference type="GO" id="GO:0005681">
    <property type="term" value="C:spliceosomal complex"/>
    <property type="evidence" value="ECO:0007669"/>
    <property type="project" value="UniProtKB-KW"/>
</dbReference>
<dbReference type="GO" id="GO:0005524">
    <property type="term" value="F:ATP binding"/>
    <property type="evidence" value="ECO:0007669"/>
    <property type="project" value="UniProtKB-KW"/>
</dbReference>
<dbReference type="GO" id="GO:0016887">
    <property type="term" value="F:ATP hydrolysis activity"/>
    <property type="evidence" value="ECO:0007669"/>
    <property type="project" value="InterPro"/>
</dbReference>
<dbReference type="GO" id="GO:0003724">
    <property type="term" value="F:RNA helicase activity"/>
    <property type="evidence" value="ECO:0007669"/>
    <property type="project" value="UniProtKB-EC"/>
</dbReference>
<dbReference type="GO" id="GO:0006397">
    <property type="term" value="P:mRNA processing"/>
    <property type="evidence" value="ECO:0007669"/>
    <property type="project" value="UniProtKB-KW"/>
</dbReference>
<dbReference type="GO" id="GO:0008380">
    <property type="term" value="P:RNA splicing"/>
    <property type="evidence" value="ECO:0007669"/>
    <property type="project" value="UniProtKB-KW"/>
</dbReference>
<dbReference type="CDD" id="cd17980">
    <property type="entry name" value="DEXHc_DHX35"/>
    <property type="match status" value="1"/>
</dbReference>
<dbReference type="CDD" id="cd18791">
    <property type="entry name" value="SF2_C_RHA"/>
    <property type="match status" value="1"/>
</dbReference>
<dbReference type="FunFam" id="3.40.50.300:FF:000767">
    <property type="entry name" value="Putative ATP-dependent RNA helicase DHX35"/>
    <property type="match status" value="1"/>
</dbReference>
<dbReference type="FunFam" id="3.40.50.300:FF:001326">
    <property type="entry name" value="Putative ATP-dependent RNA helicase DHX35"/>
    <property type="match status" value="1"/>
</dbReference>
<dbReference type="Gene3D" id="1.20.120.1080">
    <property type="match status" value="1"/>
</dbReference>
<dbReference type="Gene3D" id="3.40.50.300">
    <property type="entry name" value="P-loop containing nucleotide triphosphate hydrolases"/>
    <property type="match status" value="2"/>
</dbReference>
<dbReference type="InterPro" id="IPR049945">
    <property type="entry name" value="AAA_22"/>
</dbReference>
<dbReference type="InterPro" id="IPR011709">
    <property type="entry name" value="DEAD-box_helicase_OB_fold"/>
</dbReference>
<dbReference type="InterPro" id="IPR002464">
    <property type="entry name" value="DNA/RNA_helicase_DEAH_CS"/>
</dbReference>
<dbReference type="InterPro" id="IPR048333">
    <property type="entry name" value="HA2_WH"/>
</dbReference>
<dbReference type="InterPro" id="IPR007502">
    <property type="entry name" value="Helicase-assoc_dom"/>
</dbReference>
<dbReference type="InterPro" id="IPR014001">
    <property type="entry name" value="Helicase_ATP-bd"/>
</dbReference>
<dbReference type="InterPro" id="IPR001650">
    <property type="entry name" value="Helicase_C-like"/>
</dbReference>
<dbReference type="InterPro" id="IPR027417">
    <property type="entry name" value="P-loop_NTPase"/>
</dbReference>
<dbReference type="PANTHER" id="PTHR18934">
    <property type="entry name" value="ATP-DEPENDENT RNA HELICASE"/>
    <property type="match status" value="1"/>
</dbReference>
<dbReference type="PANTHER" id="PTHR18934:SF136">
    <property type="entry name" value="ATP-DEPENDENT RNA HELICASE DHX35-RELATED"/>
    <property type="match status" value="1"/>
</dbReference>
<dbReference type="Pfam" id="PF13401">
    <property type="entry name" value="AAA_22"/>
    <property type="match status" value="1"/>
</dbReference>
<dbReference type="Pfam" id="PF21010">
    <property type="entry name" value="HA2_C"/>
    <property type="match status" value="1"/>
</dbReference>
<dbReference type="Pfam" id="PF04408">
    <property type="entry name" value="HA2_N"/>
    <property type="match status" value="1"/>
</dbReference>
<dbReference type="Pfam" id="PF00271">
    <property type="entry name" value="Helicase_C"/>
    <property type="match status" value="1"/>
</dbReference>
<dbReference type="Pfam" id="PF07717">
    <property type="entry name" value="OB_NTP_bind"/>
    <property type="match status" value="1"/>
</dbReference>
<dbReference type="SMART" id="SM00487">
    <property type="entry name" value="DEXDc"/>
    <property type="match status" value="1"/>
</dbReference>
<dbReference type="SMART" id="SM00847">
    <property type="entry name" value="HA2"/>
    <property type="match status" value="1"/>
</dbReference>
<dbReference type="SMART" id="SM00490">
    <property type="entry name" value="HELICc"/>
    <property type="match status" value="1"/>
</dbReference>
<dbReference type="SUPFAM" id="SSF52540">
    <property type="entry name" value="P-loop containing nucleoside triphosphate hydrolases"/>
    <property type="match status" value="1"/>
</dbReference>
<dbReference type="PROSITE" id="PS00690">
    <property type="entry name" value="DEAH_ATP_HELICASE"/>
    <property type="match status" value="1"/>
</dbReference>
<dbReference type="PROSITE" id="PS51192">
    <property type="entry name" value="HELICASE_ATP_BIND_1"/>
    <property type="match status" value="1"/>
</dbReference>
<dbReference type="PROSITE" id="PS51194">
    <property type="entry name" value="HELICASE_CTER"/>
    <property type="match status" value="1"/>
</dbReference>
<evidence type="ECO:0000255" key="1">
    <source>
        <dbReference type="PROSITE-ProRule" id="PRU00541"/>
    </source>
</evidence>
<evidence type="ECO:0000255" key="2">
    <source>
        <dbReference type="PROSITE-ProRule" id="PRU00542"/>
    </source>
</evidence>
<evidence type="ECO:0000305" key="3"/>
<evidence type="ECO:0000312" key="4">
    <source>
        <dbReference type="Araport" id="AT4G18465"/>
    </source>
</evidence>
<evidence type="ECO:0000312" key="5">
    <source>
        <dbReference type="EMBL" id="CAA16726.1"/>
    </source>
</evidence>
<keyword id="KW-0067">ATP-binding</keyword>
<keyword id="KW-0347">Helicase</keyword>
<keyword id="KW-0378">Hydrolase</keyword>
<keyword id="KW-0507">mRNA processing</keyword>
<keyword id="KW-0508">mRNA splicing</keyword>
<keyword id="KW-0547">Nucleotide-binding</keyword>
<keyword id="KW-1185">Reference proteome</keyword>
<keyword id="KW-0747">Spliceosome</keyword>
<organism>
    <name type="scientific">Arabidopsis thaliana</name>
    <name type="common">Mouse-ear cress</name>
    <dbReference type="NCBI Taxonomy" id="3702"/>
    <lineage>
        <taxon>Eukaryota</taxon>
        <taxon>Viridiplantae</taxon>
        <taxon>Streptophyta</taxon>
        <taxon>Embryophyta</taxon>
        <taxon>Tracheophyta</taxon>
        <taxon>Spermatophyta</taxon>
        <taxon>Magnoliopsida</taxon>
        <taxon>eudicotyledons</taxon>
        <taxon>Gunneridae</taxon>
        <taxon>Pentapetalae</taxon>
        <taxon>rosids</taxon>
        <taxon>malvids</taxon>
        <taxon>Brassicales</taxon>
        <taxon>Brassicaceae</taxon>
        <taxon>Camelineae</taxon>
        <taxon>Arabidopsis</taxon>
    </lineage>
</organism>
<protein>
    <recommendedName>
        <fullName evidence="3">Probable pre-mRNA-splicing factor ATP-dependent RNA helicase DEAH9</fullName>
        <ecNumber>3.6.4.13</ecNumber>
    </recommendedName>
    <alternativeName>
        <fullName evidence="3">DEAH RNA helicase homolog DDX35</fullName>
    </alternativeName>
</protein>
<reference key="1">
    <citation type="journal article" date="1999" name="Nature">
        <title>Sequence and analysis of chromosome 4 of the plant Arabidopsis thaliana.</title>
        <authorList>
            <person name="Mayer K.F.X."/>
            <person name="Schueller C."/>
            <person name="Wambutt R."/>
            <person name="Murphy G."/>
            <person name="Volckaert G."/>
            <person name="Pohl T."/>
            <person name="Duesterhoeft A."/>
            <person name="Stiekema W."/>
            <person name="Entian K.-D."/>
            <person name="Terryn N."/>
            <person name="Harris B."/>
            <person name="Ansorge W."/>
            <person name="Brandt P."/>
            <person name="Grivell L.A."/>
            <person name="Rieger M."/>
            <person name="Weichselgartner M."/>
            <person name="de Simone V."/>
            <person name="Obermaier B."/>
            <person name="Mache R."/>
            <person name="Mueller M."/>
            <person name="Kreis M."/>
            <person name="Delseny M."/>
            <person name="Puigdomenech P."/>
            <person name="Watson M."/>
            <person name="Schmidtheini T."/>
            <person name="Reichert B."/>
            <person name="Portetelle D."/>
            <person name="Perez-Alonso M."/>
            <person name="Boutry M."/>
            <person name="Bancroft I."/>
            <person name="Vos P."/>
            <person name="Hoheisel J."/>
            <person name="Zimmermann W."/>
            <person name="Wedler H."/>
            <person name="Ridley P."/>
            <person name="Langham S.-A."/>
            <person name="McCullagh B."/>
            <person name="Bilham L."/>
            <person name="Robben J."/>
            <person name="van der Schueren J."/>
            <person name="Grymonprez B."/>
            <person name="Chuang Y.-J."/>
            <person name="Vandenbussche F."/>
            <person name="Braeken M."/>
            <person name="Weltjens I."/>
            <person name="Voet M."/>
            <person name="Bastiaens I."/>
            <person name="Aert R."/>
            <person name="Defoor E."/>
            <person name="Weitzenegger T."/>
            <person name="Bothe G."/>
            <person name="Ramsperger U."/>
            <person name="Hilbert H."/>
            <person name="Braun M."/>
            <person name="Holzer E."/>
            <person name="Brandt A."/>
            <person name="Peters S."/>
            <person name="van Staveren M."/>
            <person name="Dirkse W."/>
            <person name="Mooijman P."/>
            <person name="Klein Lankhorst R."/>
            <person name="Rose M."/>
            <person name="Hauf J."/>
            <person name="Koetter P."/>
            <person name="Berneiser S."/>
            <person name="Hempel S."/>
            <person name="Feldpausch M."/>
            <person name="Lamberth S."/>
            <person name="Van den Daele H."/>
            <person name="De Keyser A."/>
            <person name="Buysshaert C."/>
            <person name="Gielen J."/>
            <person name="Villarroel R."/>
            <person name="De Clercq R."/>
            <person name="van Montagu M."/>
            <person name="Rogers J."/>
            <person name="Cronin A."/>
            <person name="Quail M.A."/>
            <person name="Bray-Allen S."/>
            <person name="Clark L."/>
            <person name="Doggett J."/>
            <person name="Hall S."/>
            <person name="Kay M."/>
            <person name="Lennard N."/>
            <person name="McLay K."/>
            <person name="Mayes R."/>
            <person name="Pettett A."/>
            <person name="Rajandream M.A."/>
            <person name="Lyne M."/>
            <person name="Benes V."/>
            <person name="Rechmann S."/>
            <person name="Borkova D."/>
            <person name="Bloecker H."/>
            <person name="Scharfe M."/>
            <person name="Grimm M."/>
            <person name="Loehnert T.-H."/>
            <person name="Dose S."/>
            <person name="de Haan M."/>
            <person name="Maarse A.C."/>
            <person name="Schaefer M."/>
            <person name="Mueller-Auer S."/>
            <person name="Gabel C."/>
            <person name="Fuchs M."/>
            <person name="Fartmann B."/>
            <person name="Granderath K."/>
            <person name="Dauner D."/>
            <person name="Herzl A."/>
            <person name="Neumann S."/>
            <person name="Argiriou A."/>
            <person name="Vitale D."/>
            <person name="Liguori R."/>
            <person name="Piravandi E."/>
            <person name="Massenet O."/>
            <person name="Quigley F."/>
            <person name="Clabauld G."/>
            <person name="Muendlein A."/>
            <person name="Felber R."/>
            <person name="Schnabl S."/>
            <person name="Hiller R."/>
            <person name="Schmidt W."/>
            <person name="Lecharny A."/>
            <person name="Aubourg S."/>
            <person name="Chefdor F."/>
            <person name="Cooke R."/>
            <person name="Berger C."/>
            <person name="Monfort A."/>
            <person name="Casacuberta E."/>
            <person name="Gibbons T."/>
            <person name="Weber N."/>
            <person name="Vandenbol M."/>
            <person name="Bargues M."/>
            <person name="Terol J."/>
            <person name="Torres A."/>
            <person name="Perez-Perez A."/>
            <person name="Purnelle B."/>
            <person name="Bent E."/>
            <person name="Johnson S."/>
            <person name="Tacon D."/>
            <person name="Jesse T."/>
            <person name="Heijnen L."/>
            <person name="Schwarz S."/>
            <person name="Scholler P."/>
            <person name="Heber S."/>
            <person name="Francs P."/>
            <person name="Bielke C."/>
            <person name="Frishman D."/>
            <person name="Haase D."/>
            <person name="Lemcke K."/>
            <person name="Mewes H.-W."/>
            <person name="Stocker S."/>
            <person name="Zaccaria P."/>
            <person name="Bevan M."/>
            <person name="Wilson R.K."/>
            <person name="de la Bastide M."/>
            <person name="Habermann K."/>
            <person name="Parnell L."/>
            <person name="Dedhia N."/>
            <person name="Gnoj L."/>
            <person name="Schutz K."/>
            <person name="Huang E."/>
            <person name="Spiegel L."/>
            <person name="Sekhon M."/>
            <person name="Murray J."/>
            <person name="Sheet P."/>
            <person name="Cordes M."/>
            <person name="Abu-Threideh J."/>
            <person name="Stoneking T."/>
            <person name="Kalicki J."/>
            <person name="Graves T."/>
            <person name="Harmon G."/>
            <person name="Edwards J."/>
            <person name="Latreille P."/>
            <person name="Courtney L."/>
            <person name="Cloud J."/>
            <person name="Abbott A."/>
            <person name="Scott K."/>
            <person name="Johnson D."/>
            <person name="Minx P."/>
            <person name="Bentley D."/>
            <person name="Fulton B."/>
            <person name="Miller N."/>
            <person name="Greco T."/>
            <person name="Kemp K."/>
            <person name="Kramer J."/>
            <person name="Fulton L."/>
            <person name="Mardis E."/>
            <person name="Dante M."/>
            <person name="Pepin K."/>
            <person name="Hillier L.W."/>
            <person name="Nelson J."/>
            <person name="Spieth J."/>
            <person name="Ryan E."/>
            <person name="Andrews S."/>
            <person name="Geisel C."/>
            <person name="Layman D."/>
            <person name="Du H."/>
            <person name="Ali J."/>
            <person name="Berghoff A."/>
            <person name="Jones K."/>
            <person name="Drone K."/>
            <person name="Cotton M."/>
            <person name="Joshu C."/>
            <person name="Antonoiu B."/>
            <person name="Zidanic M."/>
            <person name="Strong C."/>
            <person name="Sun H."/>
            <person name="Lamar B."/>
            <person name="Yordan C."/>
            <person name="Ma P."/>
            <person name="Zhong J."/>
            <person name="Preston R."/>
            <person name="Vil D."/>
            <person name="Shekher M."/>
            <person name="Matero A."/>
            <person name="Shah R."/>
            <person name="Swaby I.K."/>
            <person name="O'Shaughnessy A."/>
            <person name="Rodriguez M."/>
            <person name="Hoffman J."/>
            <person name="Till S."/>
            <person name="Granat S."/>
            <person name="Shohdy N."/>
            <person name="Hasegawa A."/>
            <person name="Hameed A."/>
            <person name="Lodhi M."/>
            <person name="Johnson A."/>
            <person name="Chen E."/>
            <person name="Marra M.A."/>
            <person name="Martienssen R."/>
            <person name="McCombie W.R."/>
        </authorList>
    </citation>
    <scope>NUCLEOTIDE SEQUENCE [LARGE SCALE GENOMIC DNA]</scope>
    <source>
        <strain>cv. Columbia</strain>
    </source>
</reference>
<reference key="2">
    <citation type="journal article" date="2017" name="Plant J.">
        <title>Araport11: a complete reannotation of the Arabidopsis thaliana reference genome.</title>
        <authorList>
            <person name="Cheng C.Y."/>
            <person name="Krishnakumar V."/>
            <person name="Chan A.P."/>
            <person name="Thibaud-Nissen F."/>
            <person name="Schobel S."/>
            <person name="Town C.D."/>
        </authorList>
    </citation>
    <scope>GENOME REANNOTATION</scope>
    <source>
        <strain>cv. Columbia</strain>
    </source>
</reference>
<reference key="3">
    <citation type="journal article" date="2013" name="PLoS ONE">
        <title>Genome-wide comparative in silico analysis of the RNA helicase gene family in Zea mays and Glycine max: a comparison with Arabidopsis and Oryza sativa.</title>
        <authorList>
            <person name="Xu R."/>
            <person name="Zhang S."/>
            <person name="Huang J."/>
            <person name="Zheng C."/>
        </authorList>
    </citation>
    <scope>GENE FAMILY</scope>
</reference>
<comment type="function">
    <text evidence="3">May be involved in pre-mRNA splicing.</text>
</comment>
<comment type="catalytic activity">
    <reaction>
        <text>ATP + H2O = ADP + phosphate + H(+)</text>
        <dbReference type="Rhea" id="RHEA:13065"/>
        <dbReference type="ChEBI" id="CHEBI:15377"/>
        <dbReference type="ChEBI" id="CHEBI:15378"/>
        <dbReference type="ChEBI" id="CHEBI:30616"/>
        <dbReference type="ChEBI" id="CHEBI:43474"/>
        <dbReference type="ChEBI" id="CHEBI:456216"/>
        <dbReference type="EC" id="3.6.4.13"/>
    </reaction>
</comment>
<comment type="similarity">
    <text evidence="3">Belongs to the DEAD box helicase family. DEAH subfamily. DDX35 sub-subfamily.</text>
</comment>
<comment type="sequence caution" evidence="3">
    <conflict type="erroneous gene model prediction">
        <sequence resource="EMBL-CDS" id="CAA16726"/>
    </conflict>
</comment>
<comment type="sequence caution" evidence="3">
    <conflict type="erroneous gene model prediction">
        <sequence resource="EMBL-CDS" id="CAB78848"/>
    </conflict>
</comment>